<evidence type="ECO:0000255" key="1">
    <source>
        <dbReference type="HAMAP-Rule" id="MF_00512"/>
    </source>
</evidence>
<evidence type="ECO:0000305" key="2"/>
<feature type="chain" id="PRO_0000258625" description="Small ribosomal subunit protein eS6">
    <location>
        <begin position="1"/>
        <end position="135"/>
    </location>
</feature>
<reference key="1">
    <citation type="journal article" date="2016" name="Stand. Genomic Sci.">
        <title>Complete genome sequence of Methanospirillum hungatei type strain JF1.</title>
        <authorList>
            <person name="Gunsalus R.P."/>
            <person name="Cook L.E."/>
            <person name="Crable B."/>
            <person name="Rohlin L."/>
            <person name="McDonald E."/>
            <person name="Mouttaki H."/>
            <person name="Sieber J.R."/>
            <person name="Poweleit N."/>
            <person name="Zhou H."/>
            <person name="Lapidus A.L."/>
            <person name="Daligault H.E."/>
            <person name="Land M."/>
            <person name="Gilna P."/>
            <person name="Ivanova N."/>
            <person name="Kyrpides N."/>
            <person name="Culley D.E."/>
            <person name="McInerney M.J."/>
        </authorList>
    </citation>
    <scope>NUCLEOTIDE SEQUENCE [LARGE SCALE GENOMIC DNA]</scope>
    <source>
        <strain>ATCC 27890 / DSM 864 / NBRC 100397 / JF-1</strain>
    </source>
</reference>
<dbReference type="EMBL" id="CP000254">
    <property type="protein sequence ID" value="ABD42188.1"/>
    <property type="molecule type" value="Genomic_DNA"/>
</dbReference>
<dbReference type="RefSeq" id="WP_011449446.1">
    <property type="nucleotide sequence ID" value="NC_007796.1"/>
</dbReference>
<dbReference type="SMR" id="Q2FU50"/>
<dbReference type="FunCoup" id="Q2FU50">
    <property type="interactions" value="121"/>
</dbReference>
<dbReference type="STRING" id="323259.Mhun_2488"/>
<dbReference type="EnsemblBacteria" id="ABD42188">
    <property type="protein sequence ID" value="ABD42188"/>
    <property type="gene ID" value="Mhun_2488"/>
</dbReference>
<dbReference type="GeneID" id="3924793"/>
<dbReference type="KEGG" id="mhu:Mhun_2488"/>
<dbReference type="eggNOG" id="arCOG01946">
    <property type="taxonomic scope" value="Archaea"/>
</dbReference>
<dbReference type="HOGENOM" id="CLU_109671_1_1_2"/>
<dbReference type="InParanoid" id="Q2FU50"/>
<dbReference type="OrthoDB" id="7793at2157"/>
<dbReference type="Proteomes" id="UP000001941">
    <property type="component" value="Chromosome"/>
</dbReference>
<dbReference type="GO" id="GO:1990904">
    <property type="term" value="C:ribonucleoprotein complex"/>
    <property type="evidence" value="ECO:0007669"/>
    <property type="project" value="UniProtKB-KW"/>
</dbReference>
<dbReference type="GO" id="GO:0005840">
    <property type="term" value="C:ribosome"/>
    <property type="evidence" value="ECO:0007669"/>
    <property type="project" value="UniProtKB-KW"/>
</dbReference>
<dbReference type="GO" id="GO:0003735">
    <property type="term" value="F:structural constituent of ribosome"/>
    <property type="evidence" value="ECO:0007669"/>
    <property type="project" value="InterPro"/>
</dbReference>
<dbReference type="GO" id="GO:0006412">
    <property type="term" value="P:translation"/>
    <property type="evidence" value="ECO:0007669"/>
    <property type="project" value="UniProtKB-UniRule"/>
</dbReference>
<dbReference type="HAMAP" id="MF_00512">
    <property type="entry name" value="Ribosomal_eS6"/>
    <property type="match status" value="1"/>
</dbReference>
<dbReference type="InterPro" id="IPR001377">
    <property type="entry name" value="Ribosomal_eS6"/>
</dbReference>
<dbReference type="InterPro" id="IPR020924">
    <property type="entry name" value="Ribosomal_eS6_arc"/>
</dbReference>
<dbReference type="NCBIfam" id="NF003294">
    <property type="entry name" value="PRK04290.1-3"/>
    <property type="match status" value="1"/>
</dbReference>
<dbReference type="PANTHER" id="PTHR11502">
    <property type="entry name" value="40S RIBOSOMAL PROTEIN S6"/>
    <property type="match status" value="1"/>
</dbReference>
<dbReference type="Pfam" id="PF01092">
    <property type="entry name" value="Ribosomal_S6e"/>
    <property type="match status" value="1"/>
</dbReference>
<dbReference type="SMART" id="SM01405">
    <property type="entry name" value="Ribosomal_S6e"/>
    <property type="match status" value="1"/>
</dbReference>
<sequence>MVDFKVVLSDPATGKAYNIDASGAGAGSFIGKRIGEEIDGAALGFDGYKIRITGASDRNGTPARKTLQIAGRRKVLMAGGVGFHPRVDGERRRKMVRGAEITQDFVQINAIVATQGSKTLAEYFAPAEPEAPAAE</sequence>
<comment type="similarity">
    <text evidence="1">Belongs to the eukaryotic ribosomal protein eS6 family.</text>
</comment>
<accession>Q2FU50</accession>
<organism>
    <name type="scientific">Methanospirillum hungatei JF-1 (strain ATCC 27890 / DSM 864 / NBRC 100397 / JF-1)</name>
    <dbReference type="NCBI Taxonomy" id="323259"/>
    <lineage>
        <taxon>Archaea</taxon>
        <taxon>Methanobacteriati</taxon>
        <taxon>Methanobacteriota</taxon>
        <taxon>Stenosarchaea group</taxon>
        <taxon>Methanomicrobia</taxon>
        <taxon>Methanomicrobiales</taxon>
        <taxon>Methanospirillaceae</taxon>
        <taxon>Methanospirillum</taxon>
    </lineage>
</organism>
<protein>
    <recommendedName>
        <fullName evidence="1">Small ribosomal subunit protein eS6</fullName>
    </recommendedName>
    <alternativeName>
        <fullName evidence="2">30S ribosomal protein S6e</fullName>
    </alternativeName>
</protein>
<gene>
    <name evidence="1" type="primary">rps6e</name>
    <name type="ordered locus">Mhun_2488</name>
</gene>
<proteinExistence type="inferred from homology"/>
<keyword id="KW-1185">Reference proteome</keyword>
<keyword id="KW-0687">Ribonucleoprotein</keyword>
<keyword id="KW-0689">Ribosomal protein</keyword>
<name>RS6E_METHJ</name>